<sequence>MPAYKYNRVFLIVMDSVGIGEAPDAADFNDEGAHTLGHIAEHMNGLHMPNMAKLGLGLIEDIKGVEKTEHPLAYYGKMQEASNGKDTMTGHWEIMGLYIDKPFKVFPEGFPDELLQELEKRSGRKIIGNKPASGTAILDELGQEHMETGALIVYTSADSVLQIAAHEEVVPLEELYRICETARELTLDPKYMVGRIIARPFVGEPGQFKRTPNRHDYALKPFDRTVMNELKDCGLDVISIGKISDIYDGEGITSSRRTVSNMDGMDKVIDTLGEDFTGLSFANLVDFDALFGHRRDPEGYGRALEEFDARLPEVFEKMREDDLLIITADHGNDPIHHGTDHTREYVPILAYSKKHKKAQMLPLADTFADIGATIADNFQTNKPKYGKSFLSLLQ</sequence>
<keyword id="KW-0963">Cytoplasm</keyword>
<keyword id="KW-0413">Isomerase</keyword>
<keyword id="KW-0464">Manganese</keyword>
<keyword id="KW-0479">Metal-binding</keyword>
<keyword id="KW-1185">Reference proteome</keyword>
<protein>
    <recommendedName>
        <fullName evidence="1">Phosphopentomutase</fullName>
        <ecNumber evidence="1">5.4.2.7</ecNumber>
    </recommendedName>
    <alternativeName>
        <fullName evidence="1">Phosphodeoxyribomutase</fullName>
    </alternativeName>
</protein>
<accession>P46353</accession>
<gene>
    <name type="primary">drm</name>
    <name type="synonym">yqkN</name>
    <name type="ordered locus">BSU23500</name>
</gene>
<feature type="chain" id="PRO_0000199810" description="Phosphopentomutase">
    <location>
        <begin position="1"/>
        <end position="394"/>
    </location>
</feature>
<feature type="binding site" evidence="1">
    <location>
        <position position="15"/>
    </location>
    <ligand>
        <name>Mn(2+)</name>
        <dbReference type="ChEBI" id="CHEBI:29035"/>
        <label>1</label>
    </ligand>
</feature>
<feature type="binding site" evidence="1">
    <location>
        <position position="288"/>
    </location>
    <ligand>
        <name>Mn(2+)</name>
        <dbReference type="ChEBI" id="CHEBI:29035"/>
        <label>2</label>
    </ligand>
</feature>
<feature type="binding site" evidence="1">
    <location>
        <position position="293"/>
    </location>
    <ligand>
        <name>Mn(2+)</name>
        <dbReference type="ChEBI" id="CHEBI:29035"/>
        <label>2</label>
    </ligand>
</feature>
<feature type="binding site" evidence="1">
    <location>
        <position position="329"/>
    </location>
    <ligand>
        <name>Mn(2+)</name>
        <dbReference type="ChEBI" id="CHEBI:29035"/>
        <label>1</label>
    </ligand>
</feature>
<feature type="binding site" evidence="1">
    <location>
        <position position="330"/>
    </location>
    <ligand>
        <name>Mn(2+)</name>
        <dbReference type="ChEBI" id="CHEBI:29035"/>
        <label>1</label>
    </ligand>
</feature>
<feature type="binding site" evidence="1">
    <location>
        <position position="341"/>
    </location>
    <ligand>
        <name>Mn(2+)</name>
        <dbReference type="ChEBI" id="CHEBI:29035"/>
        <label>2</label>
    </ligand>
</feature>
<feature type="sequence conflict" description="In Ref. 2; BAA12650." evidence="2" ref="2">
    <original>M</original>
    <variation>L</variation>
    <location>
        <position position="78"/>
    </location>
</feature>
<feature type="sequence conflict" description="In Ref. 1; AAA74433." evidence="2" ref="1">
    <original>Q</original>
    <variation>QFK</variation>
    <location>
        <position position="207"/>
    </location>
</feature>
<feature type="sequence conflict" description="In Ref. 2; BAA12650." evidence="2" ref="2">
    <original>E</original>
    <variation>G</variation>
    <location>
        <position position="316"/>
    </location>
</feature>
<reference key="1">
    <citation type="journal article" date="1999" name="Microbiology">
        <title>Nucleosides as a carbon source in Bacillus subtilis: characterization of the drm-pupG operon.</title>
        <authorList>
            <person name="Schuch R."/>
            <person name="Garibian A."/>
            <person name="Saxild H.H."/>
            <person name="Piggot P.J."/>
            <person name="Nygaard P."/>
        </authorList>
    </citation>
    <scope>NUCLEOTIDE SEQUENCE [GENOMIC DNA]</scope>
    <source>
        <strain>168 / BR151</strain>
    </source>
</reference>
<reference key="2">
    <citation type="journal article" date="1996" name="Microbiology">
        <title>Systematic sequencing of the 283 kb 210 degrees-232 degrees region of the Bacillus subtilis genome containing the skin element and many sporulation genes.</title>
        <authorList>
            <person name="Mizuno M."/>
            <person name="Masuda S."/>
            <person name="Takemaru K."/>
            <person name="Hosono S."/>
            <person name="Sato T."/>
            <person name="Takeuchi M."/>
            <person name="Kobayashi Y."/>
        </authorList>
    </citation>
    <scope>NUCLEOTIDE SEQUENCE [GENOMIC DNA]</scope>
    <source>
        <strain>168 / JH642</strain>
    </source>
</reference>
<reference key="3">
    <citation type="journal article" date="1997" name="Nature">
        <title>The complete genome sequence of the Gram-positive bacterium Bacillus subtilis.</title>
        <authorList>
            <person name="Kunst F."/>
            <person name="Ogasawara N."/>
            <person name="Moszer I."/>
            <person name="Albertini A.M."/>
            <person name="Alloni G."/>
            <person name="Azevedo V."/>
            <person name="Bertero M.G."/>
            <person name="Bessieres P."/>
            <person name="Bolotin A."/>
            <person name="Borchert S."/>
            <person name="Borriss R."/>
            <person name="Boursier L."/>
            <person name="Brans A."/>
            <person name="Braun M."/>
            <person name="Brignell S.C."/>
            <person name="Bron S."/>
            <person name="Brouillet S."/>
            <person name="Bruschi C.V."/>
            <person name="Caldwell B."/>
            <person name="Capuano V."/>
            <person name="Carter N.M."/>
            <person name="Choi S.-K."/>
            <person name="Codani J.-J."/>
            <person name="Connerton I.F."/>
            <person name="Cummings N.J."/>
            <person name="Daniel R.A."/>
            <person name="Denizot F."/>
            <person name="Devine K.M."/>
            <person name="Duesterhoeft A."/>
            <person name="Ehrlich S.D."/>
            <person name="Emmerson P.T."/>
            <person name="Entian K.-D."/>
            <person name="Errington J."/>
            <person name="Fabret C."/>
            <person name="Ferrari E."/>
            <person name="Foulger D."/>
            <person name="Fritz C."/>
            <person name="Fujita M."/>
            <person name="Fujita Y."/>
            <person name="Fuma S."/>
            <person name="Galizzi A."/>
            <person name="Galleron N."/>
            <person name="Ghim S.-Y."/>
            <person name="Glaser P."/>
            <person name="Goffeau A."/>
            <person name="Golightly E.J."/>
            <person name="Grandi G."/>
            <person name="Guiseppi G."/>
            <person name="Guy B.J."/>
            <person name="Haga K."/>
            <person name="Haiech J."/>
            <person name="Harwood C.R."/>
            <person name="Henaut A."/>
            <person name="Hilbert H."/>
            <person name="Holsappel S."/>
            <person name="Hosono S."/>
            <person name="Hullo M.-F."/>
            <person name="Itaya M."/>
            <person name="Jones L.-M."/>
            <person name="Joris B."/>
            <person name="Karamata D."/>
            <person name="Kasahara Y."/>
            <person name="Klaerr-Blanchard M."/>
            <person name="Klein C."/>
            <person name="Kobayashi Y."/>
            <person name="Koetter P."/>
            <person name="Koningstein G."/>
            <person name="Krogh S."/>
            <person name="Kumano M."/>
            <person name="Kurita K."/>
            <person name="Lapidus A."/>
            <person name="Lardinois S."/>
            <person name="Lauber J."/>
            <person name="Lazarevic V."/>
            <person name="Lee S.-M."/>
            <person name="Levine A."/>
            <person name="Liu H."/>
            <person name="Masuda S."/>
            <person name="Mauel C."/>
            <person name="Medigue C."/>
            <person name="Medina N."/>
            <person name="Mellado R.P."/>
            <person name="Mizuno M."/>
            <person name="Moestl D."/>
            <person name="Nakai S."/>
            <person name="Noback M."/>
            <person name="Noone D."/>
            <person name="O'Reilly M."/>
            <person name="Ogawa K."/>
            <person name="Ogiwara A."/>
            <person name="Oudega B."/>
            <person name="Park S.-H."/>
            <person name="Parro V."/>
            <person name="Pohl T.M."/>
            <person name="Portetelle D."/>
            <person name="Porwollik S."/>
            <person name="Prescott A.M."/>
            <person name="Presecan E."/>
            <person name="Pujic P."/>
            <person name="Purnelle B."/>
            <person name="Rapoport G."/>
            <person name="Rey M."/>
            <person name="Reynolds S."/>
            <person name="Rieger M."/>
            <person name="Rivolta C."/>
            <person name="Rocha E."/>
            <person name="Roche B."/>
            <person name="Rose M."/>
            <person name="Sadaie Y."/>
            <person name="Sato T."/>
            <person name="Scanlan E."/>
            <person name="Schleich S."/>
            <person name="Schroeter R."/>
            <person name="Scoffone F."/>
            <person name="Sekiguchi J."/>
            <person name="Sekowska A."/>
            <person name="Seror S.J."/>
            <person name="Serror P."/>
            <person name="Shin B.-S."/>
            <person name="Soldo B."/>
            <person name="Sorokin A."/>
            <person name="Tacconi E."/>
            <person name="Takagi T."/>
            <person name="Takahashi H."/>
            <person name="Takemaru K."/>
            <person name="Takeuchi M."/>
            <person name="Tamakoshi A."/>
            <person name="Tanaka T."/>
            <person name="Terpstra P."/>
            <person name="Tognoni A."/>
            <person name="Tosato V."/>
            <person name="Uchiyama S."/>
            <person name="Vandenbol M."/>
            <person name="Vannier F."/>
            <person name="Vassarotti A."/>
            <person name="Viari A."/>
            <person name="Wambutt R."/>
            <person name="Wedler E."/>
            <person name="Wedler H."/>
            <person name="Weitzenegger T."/>
            <person name="Winters P."/>
            <person name="Wipat A."/>
            <person name="Yamamoto H."/>
            <person name="Yamane K."/>
            <person name="Yasumoto K."/>
            <person name="Yata K."/>
            <person name="Yoshida K."/>
            <person name="Yoshikawa H.-F."/>
            <person name="Zumstein E."/>
            <person name="Yoshikawa H."/>
            <person name="Danchin A."/>
        </authorList>
    </citation>
    <scope>NUCLEOTIDE SEQUENCE [LARGE SCALE GENOMIC DNA]</scope>
    <source>
        <strain>168</strain>
    </source>
</reference>
<reference key="4">
    <citation type="journal article" date="2009" name="Microbiology">
        <title>From a consortium sequence to a unified sequence: the Bacillus subtilis 168 reference genome a decade later.</title>
        <authorList>
            <person name="Barbe V."/>
            <person name="Cruveiller S."/>
            <person name="Kunst F."/>
            <person name="Lenoble P."/>
            <person name="Meurice G."/>
            <person name="Sekowska A."/>
            <person name="Vallenet D."/>
            <person name="Wang T."/>
            <person name="Moszer I."/>
            <person name="Medigue C."/>
            <person name="Danchin A."/>
        </authorList>
    </citation>
    <scope>SEQUENCE REVISION TO 78 AND 316</scope>
</reference>
<organism>
    <name type="scientific">Bacillus subtilis (strain 168)</name>
    <dbReference type="NCBI Taxonomy" id="224308"/>
    <lineage>
        <taxon>Bacteria</taxon>
        <taxon>Bacillati</taxon>
        <taxon>Bacillota</taxon>
        <taxon>Bacilli</taxon>
        <taxon>Bacillales</taxon>
        <taxon>Bacillaceae</taxon>
        <taxon>Bacillus</taxon>
    </lineage>
</organism>
<comment type="function">
    <text evidence="1">Isomerase that catalyzes the conversion of deoxy-ribose 1-phosphate (dRib-1-P) and ribose 1-phosphate (Rib-1-P) to deoxy-ribose 5-phosphate (dRib-5-P) and ribose 5-phosphate (Rib-5-P), respectively.</text>
</comment>
<comment type="catalytic activity">
    <reaction evidence="1">
        <text>2-deoxy-alpha-D-ribose 1-phosphate = 2-deoxy-D-ribose 5-phosphate</text>
        <dbReference type="Rhea" id="RHEA:27658"/>
        <dbReference type="ChEBI" id="CHEBI:57259"/>
        <dbReference type="ChEBI" id="CHEBI:62877"/>
        <dbReference type="EC" id="5.4.2.7"/>
    </reaction>
</comment>
<comment type="catalytic activity">
    <reaction evidence="1">
        <text>alpha-D-ribose 1-phosphate = D-ribose 5-phosphate</text>
        <dbReference type="Rhea" id="RHEA:18793"/>
        <dbReference type="ChEBI" id="CHEBI:57720"/>
        <dbReference type="ChEBI" id="CHEBI:78346"/>
        <dbReference type="EC" id="5.4.2.7"/>
    </reaction>
</comment>
<comment type="cofactor">
    <cofactor evidence="1">
        <name>Mn(2+)</name>
        <dbReference type="ChEBI" id="CHEBI:29035"/>
    </cofactor>
    <text evidence="1">Binds 2 manganese ions.</text>
</comment>
<comment type="pathway">
    <text evidence="1">Carbohydrate degradation; 2-deoxy-D-ribose 1-phosphate degradation; D-glyceraldehyde 3-phosphate and acetaldehyde from 2-deoxy-alpha-D-ribose 1-phosphate: step 1/2.</text>
</comment>
<comment type="subcellular location">
    <subcellularLocation>
        <location evidence="1">Cytoplasm</location>
    </subcellularLocation>
</comment>
<comment type="similarity">
    <text evidence="1 2">Belongs to the phosphopentomutase family.</text>
</comment>
<name>DEOB_BACSU</name>
<dbReference type="EC" id="5.4.2.7" evidence="1"/>
<dbReference type="EMBL" id="U32685">
    <property type="protein sequence ID" value="AAA74433.1"/>
    <property type="molecule type" value="Genomic_DNA"/>
</dbReference>
<dbReference type="EMBL" id="D84432">
    <property type="protein sequence ID" value="BAA12650.1"/>
    <property type="molecule type" value="Genomic_DNA"/>
</dbReference>
<dbReference type="EMBL" id="AL009126">
    <property type="protein sequence ID" value="CAB14282.2"/>
    <property type="molecule type" value="Genomic_DNA"/>
</dbReference>
<dbReference type="PIR" id="B69619">
    <property type="entry name" value="B69619"/>
</dbReference>
<dbReference type="SMR" id="P46353"/>
<dbReference type="FunCoup" id="P46353">
    <property type="interactions" value="98"/>
</dbReference>
<dbReference type="STRING" id="224308.BSU23500"/>
<dbReference type="jPOST" id="P46353"/>
<dbReference type="PaxDb" id="224308-BSU23500"/>
<dbReference type="EnsemblBacteria" id="CAB14282">
    <property type="protein sequence ID" value="CAB14282"/>
    <property type="gene ID" value="BSU_23500"/>
</dbReference>
<dbReference type="GeneID" id="938728"/>
<dbReference type="KEGG" id="bsu:BSU23500"/>
<dbReference type="PATRIC" id="fig|224308.179.peg.2560"/>
<dbReference type="eggNOG" id="COG1015">
    <property type="taxonomic scope" value="Bacteria"/>
</dbReference>
<dbReference type="InParanoid" id="P46353"/>
<dbReference type="OrthoDB" id="9769930at2"/>
<dbReference type="PhylomeDB" id="P46353"/>
<dbReference type="BioCyc" id="BSUB:BSU23500-MONOMER"/>
<dbReference type="UniPathway" id="UPA00002">
    <property type="reaction ID" value="UER00467"/>
</dbReference>
<dbReference type="Proteomes" id="UP000001570">
    <property type="component" value="Chromosome"/>
</dbReference>
<dbReference type="GO" id="GO:0005829">
    <property type="term" value="C:cytosol"/>
    <property type="evidence" value="ECO:0000318"/>
    <property type="project" value="GO_Central"/>
</dbReference>
<dbReference type="GO" id="GO:0000287">
    <property type="term" value="F:magnesium ion binding"/>
    <property type="evidence" value="ECO:0007669"/>
    <property type="project" value="InterPro"/>
</dbReference>
<dbReference type="GO" id="GO:0030145">
    <property type="term" value="F:manganese ion binding"/>
    <property type="evidence" value="ECO:0007669"/>
    <property type="project" value="UniProtKB-UniRule"/>
</dbReference>
<dbReference type="GO" id="GO:0008973">
    <property type="term" value="F:phosphopentomutase activity"/>
    <property type="evidence" value="ECO:0000318"/>
    <property type="project" value="GO_Central"/>
</dbReference>
<dbReference type="GO" id="GO:0006018">
    <property type="term" value="P:2-deoxyribose 1-phosphate catabolic process"/>
    <property type="evidence" value="ECO:0007669"/>
    <property type="project" value="UniProtKB-UniRule"/>
</dbReference>
<dbReference type="GO" id="GO:0006015">
    <property type="term" value="P:5-phosphoribose 1-diphosphate biosynthetic process"/>
    <property type="evidence" value="ECO:0007669"/>
    <property type="project" value="UniProtKB-UniPathway"/>
</dbReference>
<dbReference type="GO" id="GO:0043094">
    <property type="term" value="P:metabolic compound salvage"/>
    <property type="evidence" value="ECO:0007669"/>
    <property type="project" value="InterPro"/>
</dbReference>
<dbReference type="GO" id="GO:0009117">
    <property type="term" value="P:nucleotide metabolic process"/>
    <property type="evidence" value="ECO:0007669"/>
    <property type="project" value="InterPro"/>
</dbReference>
<dbReference type="CDD" id="cd16009">
    <property type="entry name" value="PPM"/>
    <property type="match status" value="1"/>
</dbReference>
<dbReference type="FunFam" id="3.30.70.1250:FF:000001">
    <property type="entry name" value="Phosphopentomutase"/>
    <property type="match status" value="1"/>
</dbReference>
<dbReference type="Gene3D" id="3.40.720.10">
    <property type="entry name" value="Alkaline Phosphatase, subunit A"/>
    <property type="match status" value="1"/>
</dbReference>
<dbReference type="Gene3D" id="3.30.70.1250">
    <property type="entry name" value="Phosphopentomutase"/>
    <property type="match status" value="1"/>
</dbReference>
<dbReference type="HAMAP" id="MF_00740">
    <property type="entry name" value="Phosphopentomut"/>
    <property type="match status" value="1"/>
</dbReference>
<dbReference type="InterPro" id="IPR017850">
    <property type="entry name" value="Alkaline_phosphatase_core_sf"/>
</dbReference>
<dbReference type="InterPro" id="IPR010045">
    <property type="entry name" value="DeoB"/>
</dbReference>
<dbReference type="InterPro" id="IPR006124">
    <property type="entry name" value="Metalloenzyme"/>
</dbReference>
<dbReference type="InterPro" id="IPR024052">
    <property type="entry name" value="Phosphopentomutase_DeoB_cap_sf"/>
</dbReference>
<dbReference type="NCBIfam" id="TIGR01696">
    <property type="entry name" value="deoB"/>
    <property type="match status" value="1"/>
</dbReference>
<dbReference type="NCBIfam" id="NF003766">
    <property type="entry name" value="PRK05362.1"/>
    <property type="match status" value="1"/>
</dbReference>
<dbReference type="PANTHER" id="PTHR21110">
    <property type="entry name" value="PHOSPHOPENTOMUTASE"/>
    <property type="match status" value="1"/>
</dbReference>
<dbReference type="PANTHER" id="PTHR21110:SF0">
    <property type="entry name" value="PHOSPHOPENTOMUTASE"/>
    <property type="match status" value="1"/>
</dbReference>
<dbReference type="Pfam" id="PF01676">
    <property type="entry name" value="Metalloenzyme"/>
    <property type="match status" value="1"/>
</dbReference>
<dbReference type="PIRSF" id="PIRSF001491">
    <property type="entry name" value="Ppentomutase"/>
    <property type="match status" value="1"/>
</dbReference>
<dbReference type="SUPFAM" id="SSF53649">
    <property type="entry name" value="Alkaline phosphatase-like"/>
    <property type="match status" value="1"/>
</dbReference>
<dbReference type="SUPFAM" id="SSF143856">
    <property type="entry name" value="DeoB insert domain-like"/>
    <property type="match status" value="1"/>
</dbReference>
<proteinExistence type="inferred from homology"/>
<evidence type="ECO:0000255" key="1">
    <source>
        <dbReference type="HAMAP-Rule" id="MF_00740"/>
    </source>
</evidence>
<evidence type="ECO:0000305" key="2"/>